<gene>
    <name evidence="1" type="primary">hisD</name>
    <name type="ordered locus">Lxx15120</name>
</gene>
<evidence type="ECO:0000255" key="1">
    <source>
        <dbReference type="HAMAP-Rule" id="MF_01024"/>
    </source>
</evidence>
<reference key="1">
    <citation type="journal article" date="2004" name="Mol. Plant Microbe Interact.">
        <title>The genome sequence of the Gram-positive sugarcane pathogen Leifsonia xyli subsp. xyli.</title>
        <authorList>
            <person name="Monteiro-Vitorello C.B."/>
            <person name="Camargo L.E.A."/>
            <person name="Van Sluys M.A."/>
            <person name="Kitajima J.P."/>
            <person name="Truffi D."/>
            <person name="do Amaral A.M."/>
            <person name="Harakava R."/>
            <person name="de Oliveira J.C.F."/>
            <person name="Wood D."/>
            <person name="de Oliveira M.C."/>
            <person name="Miyaki C.Y."/>
            <person name="Takita M.A."/>
            <person name="da Silva A.C.R."/>
            <person name="Furlan L.R."/>
            <person name="Carraro D.M."/>
            <person name="Camarotte G."/>
            <person name="Almeida N.F. Jr."/>
            <person name="Carrer H."/>
            <person name="Coutinho L.L."/>
            <person name="El-Dorry H.A."/>
            <person name="Ferro M.I.T."/>
            <person name="Gagliardi P.R."/>
            <person name="Giglioti E."/>
            <person name="Goldman M.H.S."/>
            <person name="Goldman G.H."/>
            <person name="Kimura E.T."/>
            <person name="Ferro E.S."/>
            <person name="Kuramae E.E."/>
            <person name="Lemos E.G.M."/>
            <person name="Lemos M.V.F."/>
            <person name="Mauro S.M.Z."/>
            <person name="Machado M.A."/>
            <person name="Marino C.L."/>
            <person name="Menck C.F."/>
            <person name="Nunes L.R."/>
            <person name="Oliveira R.C."/>
            <person name="Pereira G.G."/>
            <person name="Siqueira W."/>
            <person name="de Souza A.A."/>
            <person name="Tsai S.M."/>
            <person name="Zanca A.S."/>
            <person name="Simpson A.J.G."/>
            <person name="Brumbley S.M."/>
            <person name="Setubal J.C."/>
        </authorList>
    </citation>
    <scope>NUCLEOTIDE SEQUENCE [LARGE SCALE GENOMIC DNA]</scope>
    <source>
        <strain>CTCB07</strain>
    </source>
</reference>
<sequence length="436" mass="44916">MQTIDLRGVQPTRTAFERLVPRPVVDVQAAMTVAADLIADVRKRGAAALREQAERFDGGVPASVRVPVAEIVAAVDALPGGVREALEEAIARVREATAAQVPPAAVTRIGPGAVIEQRWQPVERAGLYVPGGKAVYPSSVVMNAVPAQVAGVASIALASPPQREFGGAVHPTILGAAGLLGIDEVYAMGGAGAIGALAWGVGELGLEPVQVITGPGNIYVAAAKRVVRGQTGIDSEAGTTEILVIADDTADPRYVAADLISQAEHDEAAASLLVTDSPAFVGRVAAELETLAASTRYAERVRAALGGQQSAVVLVDDLDAAAAFSNAYGPEHLELQTADAEAVLARIQNAGAIFVGPHAPVSLGDYLAGSNHVLPTGGQARFSPGLGAYSFLRPQQVIRYDREALRAVAGRIVALSGAEDLSAHGEAVTLRFEERA</sequence>
<protein>
    <recommendedName>
        <fullName evidence="1">Histidinol dehydrogenase</fullName>
        <shortName evidence="1">HDH</shortName>
        <ecNumber evidence="1">1.1.1.23</ecNumber>
    </recommendedName>
</protein>
<accession>Q6AE76</accession>
<keyword id="KW-0028">Amino-acid biosynthesis</keyword>
<keyword id="KW-0368">Histidine biosynthesis</keyword>
<keyword id="KW-0479">Metal-binding</keyword>
<keyword id="KW-0520">NAD</keyword>
<keyword id="KW-0560">Oxidoreductase</keyword>
<keyword id="KW-1185">Reference proteome</keyword>
<keyword id="KW-0862">Zinc</keyword>
<dbReference type="EC" id="1.1.1.23" evidence="1"/>
<dbReference type="EMBL" id="AE016822">
    <property type="protein sequence ID" value="AAT89320.1"/>
    <property type="molecule type" value="Genomic_DNA"/>
</dbReference>
<dbReference type="SMR" id="Q6AE76"/>
<dbReference type="STRING" id="281090.Lxx15120"/>
<dbReference type="KEGG" id="lxx:Lxx15120"/>
<dbReference type="eggNOG" id="COG0141">
    <property type="taxonomic scope" value="Bacteria"/>
</dbReference>
<dbReference type="HOGENOM" id="CLU_006732_3_1_11"/>
<dbReference type="UniPathway" id="UPA00031">
    <property type="reaction ID" value="UER00014"/>
</dbReference>
<dbReference type="Proteomes" id="UP000001306">
    <property type="component" value="Chromosome"/>
</dbReference>
<dbReference type="GO" id="GO:0005829">
    <property type="term" value="C:cytosol"/>
    <property type="evidence" value="ECO:0007669"/>
    <property type="project" value="TreeGrafter"/>
</dbReference>
<dbReference type="GO" id="GO:0004399">
    <property type="term" value="F:histidinol dehydrogenase activity"/>
    <property type="evidence" value="ECO:0007669"/>
    <property type="project" value="UniProtKB-UniRule"/>
</dbReference>
<dbReference type="GO" id="GO:0051287">
    <property type="term" value="F:NAD binding"/>
    <property type="evidence" value="ECO:0007669"/>
    <property type="project" value="InterPro"/>
</dbReference>
<dbReference type="GO" id="GO:0008270">
    <property type="term" value="F:zinc ion binding"/>
    <property type="evidence" value="ECO:0007669"/>
    <property type="project" value="UniProtKB-UniRule"/>
</dbReference>
<dbReference type="GO" id="GO:0000105">
    <property type="term" value="P:L-histidine biosynthetic process"/>
    <property type="evidence" value="ECO:0007669"/>
    <property type="project" value="UniProtKB-UniRule"/>
</dbReference>
<dbReference type="CDD" id="cd06572">
    <property type="entry name" value="Histidinol_dh"/>
    <property type="match status" value="1"/>
</dbReference>
<dbReference type="FunFam" id="3.40.50.1980:FF:000001">
    <property type="entry name" value="Histidinol dehydrogenase"/>
    <property type="match status" value="1"/>
</dbReference>
<dbReference type="Gene3D" id="1.20.5.1300">
    <property type="match status" value="1"/>
</dbReference>
<dbReference type="Gene3D" id="3.40.50.1980">
    <property type="entry name" value="Nitrogenase molybdenum iron protein domain"/>
    <property type="match status" value="2"/>
</dbReference>
<dbReference type="HAMAP" id="MF_01024">
    <property type="entry name" value="HisD"/>
    <property type="match status" value="1"/>
</dbReference>
<dbReference type="InterPro" id="IPR016161">
    <property type="entry name" value="Ald_DH/histidinol_DH"/>
</dbReference>
<dbReference type="InterPro" id="IPR001692">
    <property type="entry name" value="Histidinol_DH_CS"/>
</dbReference>
<dbReference type="InterPro" id="IPR022695">
    <property type="entry name" value="Histidinol_DH_monofunct"/>
</dbReference>
<dbReference type="InterPro" id="IPR012131">
    <property type="entry name" value="Hstdl_DH"/>
</dbReference>
<dbReference type="NCBIfam" id="TIGR00069">
    <property type="entry name" value="hisD"/>
    <property type="match status" value="1"/>
</dbReference>
<dbReference type="PANTHER" id="PTHR21256:SF2">
    <property type="entry name" value="HISTIDINE BIOSYNTHESIS TRIFUNCTIONAL PROTEIN"/>
    <property type="match status" value="1"/>
</dbReference>
<dbReference type="PANTHER" id="PTHR21256">
    <property type="entry name" value="HISTIDINOL DEHYDROGENASE HDH"/>
    <property type="match status" value="1"/>
</dbReference>
<dbReference type="Pfam" id="PF00815">
    <property type="entry name" value="Histidinol_dh"/>
    <property type="match status" value="1"/>
</dbReference>
<dbReference type="PIRSF" id="PIRSF000099">
    <property type="entry name" value="Histidinol_dh"/>
    <property type="match status" value="1"/>
</dbReference>
<dbReference type="PRINTS" id="PR00083">
    <property type="entry name" value="HOLDHDRGNASE"/>
</dbReference>
<dbReference type="SUPFAM" id="SSF53720">
    <property type="entry name" value="ALDH-like"/>
    <property type="match status" value="1"/>
</dbReference>
<dbReference type="PROSITE" id="PS00611">
    <property type="entry name" value="HISOL_DEHYDROGENASE"/>
    <property type="match status" value="1"/>
</dbReference>
<comment type="function">
    <text evidence="1">Catalyzes the sequential NAD-dependent oxidations of L-histidinol to L-histidinaldehyde and then to L-histidine.</text>
</comment>
<comment type="catalytic activity">
    <reaction evidence="1">
        <text>L-histidinol + 2 NAD(+) + H2O = L-histidine + 2 NADH + 3 H(+)</text>
        <dbReference type="Rhea" id="RHEA:20641"/>
        <dbReference type="ChEBI" id="CHEBI:15377"/>
        <dbReference type="ChEBI" id="CHEBI:15378"/>
        <dbReference type="ChEBI" id="CHEBI:57540"/>
        <dbReference type="ChEBI" id="CHEBI:57595"/>
        <dbReference type="ChEBI" id="CHEBI:57699"/>
        <dbReference type="ChEBI" id="CHEBI:57945"/>
        <dbReference type="EC" id="1.1.1.23"/>
    </reaction>
</comment>
<comment type="cofactor">
    <cofactor evidence="1">
        <name>Zn(2+)</name>
        <dbReference type="ChEBI" id="CHEBI:29105"/>
    </cofactor>
    <text evidence="1">Binds 1 zinc ion per subunit.</text>
</comment>
<comment type="pathway">
    <text evidence="1">Amino-acid biosynthesis; L-histidine biosynthesis; L-histidine from 5-phospho-alpha-D-ribose 1-diphosphate: step 9/9.</text>
</comment>
<comment type="similarity">
    <text evidence="1">Belongs to the histidinol dehydrogenase family.</text>
</comment>
<feature type="chain" id="PRO_0000135787" description="Histidinol dehydrogenase">
    <location>
        <begin position="1"/>
        <end position="436"/>
    </location>
</feature>
<feature type="active site" description="Proton acceptor" evidence="1">
    <location>
        <position position="331"/>
    </location>
</feature>
<feature type="active site" description="Proton acceptor" evidence="1">
    <location>
        <position position="332"/>
    </location>
</feature>
<feature type="binding site" evidence="1">
    <location>
        <position position="240"/>
    </location>
    <ligand>
        <name>substrate</name>
    </ligand>
</feature>
<feature type="binding site" evidence="1">
    <location>
        <position position="262"/>
    </location>
    <ligand>
        <name>substrate</name>
    </ligand>
</feature>
<feature type="binding site" evidence="1">
    <location>
        <position position="262"/>
    </location>
    <ligand>
        <name>Zn(2+)</name>
        <dbReference type="ChEBI" id="CHEBI:29105"/>
    </ligand>
</feature>
<feature type="binding site" evidence="1">
    <location>
        <position position="265"/>
    </location>
    <ligand>
        <name>substrate</name>
    </ligand>
</feature>
<feature type="binding site" evidence="1">
    <location>
        <position position="265"/>
    </location>
    <ligand>
        <name>Zn(2+)</name>
        <dbReference type="ChEBI" id="CHEBI:29105"/>
    </ligand>
</feature>
<feature type="binding site" evidence="1">
    <location>
        <position position="332"/>
    </location>
    <ligand>
        <name>substrate</name>
    </ligand>
</feature>
<feature type="binding site" evidence="1">
    <location>
        <position position="365"/>
    </location>
    <ligand>
        <name>substrate</name>
    </ligand>
</feature>
<feature type="binding site" evidence="1">
    <location>
        <position position="365"/>
    </location>
    <ligand>
        <name>Zn(2+)</name>
        <dbReference type="ChEBI" id="CHEBI:29105"/>
    </ligand>
</feature>
<feature type="binding site" evidence="1">
    <location>
        <position position="419"/>
    </location>
    <ligand>
        <name>substrate</name>
    </ligand>
</feature>
<feature type="binding site" evidence="1">
    <location>
        <position position="424"/>
    </location>
    <ligand>
        <name>substrate</name>
    </ligand>
</feature>
<feature type="binding site" evidence="1">
    <location>
        <position position="424"/>
    </location>
    <ligand>
        <name>Zn(2+)</name>
        <dbReference type="ChEBI" id="CHEBI:29105"/>
    </ligand>
</feature>
<organism>
    <name type="scientific">Leifsonia xyli subsp. xyli (strain CTCB07)</name>
    <dbReference type="NCBI Taxonomy" id="281090"/>
    <lineage>
        <taxon>Bacteria</taxon>
        <taxon>Bacillati</taxon>
        <taxon>Actinomycetota</taxon>
        <taxon>Actinomycetes</taxon>
        <taxon>Micrococcales</taxon>
        <taxon>Microbacteriaceae</taxon>
        <taxon>Leifsonia</taxon>
    </lineage>
</organism>
<proteinExistence type="inferred from homology"/>
<name>HISX_LEIXX</name>